<dbReference type="EMBL" id="GQ489027">
    <property type="protein sequence ID" value="ACV92100.1"/>
    <property type="molecule type" value="mRNA"/>
</dbReference>
<dbReference type="EMBL" id="AC112520">
    <property type="status" value="NOT_ANNOTATED_CDS"/>
    <property type="molecule type" value="Genomic_DNA"/>
</dbReference>
<dbReference type="EMBL" id="AB054031">
    <property type="protein sequence ID" value="BAB32495.1"/>
    <property type="molecule type" value="Genomic_DNA"/>
</dbReference>
<dbReference type="EMBL" id="AK129315">
    <property type="protein sequence ID" value="BAC98125.1"/>
    <property type="molecule type" value="mRNA"/>
</dbReference>
<dbReference type="EMBL" id="BC059062">
    <property type="protein sequence ID" value="AAH59062.1"/>
    <property type="molecule type" value="mRNA"/>
</dbReference>
<dbReference type="EMBL" id="BC094358">
    <property type="protein sequence ID" value="AAH94358.1"/>
    <property type="molecule type" value="mRNA"/>
</dbReference>
<dbReference type="CCDS" id="CCDS49186.1"/>
<dbReference type="RefSeq" id="NP_001091090.1">
    <property type="nucleotide sequence ID" value="NM_001097621.1"/>
</dbReference>
<dbReference type="SMR" id="Q52KG5"/>
<dbReference type="FunCoup" id="Q52KG5">
    <property type="interactions" value="119"/>
</dbReference>
<dbReference type="IntAct" id="Q52KG5">
    <property type="interactions" value="2"/>
</dbReference>
<dbReference type="STRING" id="10090.ENSMUSP00000119482"/>
<dbReference type="GlyGen" id="Q52KG5">
    <property type="glycosylation" value="4 sites"/>
</dbReference>
<dbReference type="iPTMnet" id="Q52KG5"/>
<dbReference type="PhosphoSitePlus" id="Q52KG5"/>
<dbReference type="jPOST" id="Q52KG5"/>
<dbReference type="PaxDb" id="10090-ENSMUSP00000119482"/>
<dbReference type="ProteomicsDB" id="264754"/>
<dbReference type="Antibodypedia" id="28168">
    <property type="antibodies" value="83 antibodies from 13 providers"/>
</dbReference>
<dbReference type="Ensembl" id="ENSMUST00000128402.3">
    <property type="protein sequence ID" value="ENSMUSP00000119482.2"/>
    <property type="gene ID" value="ENSMUSG00000021294.8"/>
</dbReference>
<dbReference type="GeneID" id="668303"/>
<dbReference type="KEGG" id="mmu:668303"/>
<dbReference type="UCSC" id="uc007pem.1">
    <property type="organism name" value="mouse"/>
</dbReference>
<dbReference type="AGR" id="MGI:2447072"/>
<dbReference type="CTD" id="26153"/>
<dbReference type="MGI" id="MGI:2447072">
    <property type="gene designation" value="Kif26a"/>
</dbReference>
<dbReference type="VEuPathDB" id="HostDB:ENSMUSG00000021294"/>
<dbReference type="eggNOG" id="KOG4280">
    <property type="taxonomic scope" value="Eukaryota"/>
</dbReference>
<dbReference type="GeneTree" id="ENSGT00940000159075"/>
<dbReference type="HOGENOM" id="CLU_002423_0_0_1"/>
<dbReference type="InParanoid" id="Q52KG5"/>
<dbReference type="OMA" id="RIMMVTC"/>
<dbReference type="OrthoDB" id="8862460at2759"/>
<dbReference type="PhylomeDB" id="Q52KG5"/>
<dbReference type="TreeFam" id="TF105235"/>
<dbReference type="Reactome" id="R-MMU-2132295">
    <property type="pathway name" value="MHC class II antigen presentation"/>
</dbReference>
<dbReference type="Reactome" id="R-MMU-6811434">
    <property type="pathway name" value="COPI-dependent Golgi-to-ER retrograde traffic"/>
</dbReference>
<dbReference type="Reactome" id="R-MMU-983189">
    <property type="pathway name" value="Kinesins"/>
</dbReference>
<dbReference type="BioGRID-ORCS" id="668303">
    <property type="hits" value="1 hit in 76 CRISPR screens"/>
</dbReference>
<dbReference type="ChiTaRS" id="Kif26a">
    <property type="organism name" value="mouse"/>
</dbReference>
<dbReference type="PRO" id="PR:Q52KG5"/>
<dbReference type="Proteomes" id="UP000000589">
    <property type="component" value="Chromosome 12"/>
</dbReference>
<dbReference type="RNAct" id="Q52KG5">
    <property type="molecule type" value="protein"/>
</dbReference>
<dbReference type="Bgee" id="ENSMUSG00000021294">
    <property type="expression patterns" value="Expressed in rostral migratory stream and 148 other cell types or tissues"/>
</dbReference>
<dbReference type="GO" id="GO:0005737">
    <property type="term" value="C:cytoplasm"/>
    <property type="evidence" value="ECO:0007669"/>
    <property type="project" value="UniProtKB-KW"/>
</dbReference>
<dbReference type="GO" id="GO:0005874">
    <property type="term" value="C:microtubule"/>
    <property type="evidence" value="ECO:0007669"/>
    <property type="project" value="UniProtKB-KW"/>
</dbReference>
<dbReference type="GO" id="GO:0005524">
    <property type="term" value="F:ATP binding"/>
    <property type="evidence" value="ECO:0007669"/>
    <property type="project" value="UniProtKB-KW"/>
</dbReference>
<dbReference type="GO" id="GO:0008017">
    <property type="term" value="F:microtubule binding"/>
    <property type="evidence" value="ECO:0000314"/>
    <property type="project" value="UniProtKB"/>
</dbReference>
<dbReference type="GO" id="GO:0021987">
    <property type="term" value="P:cerebral cortex development"/>
    <property type="evidence" value="ECO:0007669"/>
    <property type="project" value="Ensembl"/>
</dbReference>
<dbReference type="GO" id="GO:0048484">
    <property type="term" value="P:enteric nervous system development"/>
    <property type="evidence" value="ECO:0000315"/>
    <property type="project" value="UniProtKB"/>
</dbReference>
<dbReference type="GO" id="GO:0009968">
    <property type="term" value="P:negative regulation of signal transduction"/>
    <property type="evidence" value="ECO:0000315"/>
    <property type="project" value="UniProtKB"/>
</dbReference>
<dbReference type="GO" id="GO:0001560">
    <property type="term" value="P:regulation of cell growth by extracellular stimulus"/>
    <property type="evidence" value="ECO:0000315"/>
    <property type="project" value="UniProtKB"/>
</dbReference>
<dbReference type="GO" id="GO:2001222">
    <property type="term" value="P:regulation of neuron migration"/>
    <property type="evidence" value="ECO:0007669"/>
    <property type="project" value="Ensembl"/>
</dbReference>
<dbReference type="GO" id="GO:0010975">
    <property type="term" value="P:regulation of neuron projection development"/>
    <property type="evidence" value="ECO:0007669"/>
    <property type="project" value="Ensembl"/>
</dbReference>
<dbReference type="CDD" id="cd00106">
    <property type="entry name" value="KISc"/>
    <property type="match status" value="1"/>
</dbReference>
<dbReference type="FunFam" id="3.40.850.10:FF:000015">
    <property type="entry name" value="Kinesin family member 26A"/>
    <property type="match status" value="1"/>
</dbReference>
<dbReference type="Gene3D" id="3.40.850.10">
    <property type="entry name" value="Kinesin motor domain"/>
    <property type="match status" value="1"/>
</dbReference>
<dbReference type="InterPro" id="IPR027640">
    <property type="entry name" value="Kinesin-like_fam"/>
</dbReference>
<dbReference type="InterPro" id="IPR001752">
    <property type="entry name" value="Kinesin_motor_dom"/>
</dbReference>
<dbReference type="InterPro" id="IPR036961">
    <property type="entry name" value="Kinesin_motor_dom_sf"/>
</dbReference>
<dbReference type="InterPro" id="IPR027417">
    <property type="entry name" value="P-loop_NTPase"/>
</dbReference>
<dbReference type="PANTHER" id="PTHR21608">
    <property type="entry name" value="KINESIN-LIKE PROTEIN CG14535"/>
    <property type="match status" value="1"/>
</dbReference>
<dbReference type="PANTHER" id="PTHR21608:SF6">
    <property type="entry name" value="KINESIN-LIKE PROTEIN KIF26A"/>
    <property type="match status" value="1"/>
</dbReference>
<dbReference type="Pfam" id="PF23081">
    <property type="entry name" value="HTH_KIF26A_B_1st"/>
    <property type="match status" value="1"/>
</dbReference>
<dbReference type="Pfam" id="PF00225">
    <property type="entry name" value="Kinesin"/>
    <property type="match status" value="1"/>
</dbReference>
<dbReference type="PRINTS" id="PR00380">
    <property type="entry name" value="KINESINHEAVY"/>
</dbReference>
<dbReference type="SMART" id="SM00129">
    <property type="entry name" value="KISc"/>
    <property type="match status" value="1"/>
</dbReference>
<dbReference type="SUPFAM" id="SSF52540">
    <property type="entry name" value="P-loop containing nucleoside triphosphate hydrolases"/>
    <property type="match status" value="1"/>
</dbReference>
<dbReference type="PROSITE" id="PS50067">
    <property type="entry name" value="KINESIN_MOTOR_2"/>
    <property type="match status" value="1"/>
</dbReference>
<reference key="1">
    <citation type="journal article" date="2009" name="Cell">
        <title>KIF26A is an unconventional kinesin and regulates GDNF-Ret signaling in enteric neuronal development.</title>
        <authorList>
            <person name="Zhou R."/>
            <person name="Niwa S."/>
            <person name="Homma N."/>
            <person name="Takei Y."/>
            <person name="Hirokawa N."/>
        </authorList>
    </citation>
    <scope>NUCLEOTIDE SEQUENCE [MRNA]</scope>
    <scope>FUNCTION</scope>
    <scope>DISRUPTION PHENOTYPE</scope>
    <scope>TISSUE SPECIFICITY</scope>
    <scope>DEVELOPMENTAL STAGE</scope>
    <scope>MICROTUBULE-BINDING</scope>
    <scope>LACK OF ATPASE ACTIVITY</scope>
    <scope>INTERACTION WITH GRB2</scope>
    <source>
        <strain>A/J</strain>
    </source>
</reference>
<reference key="2">
    <citation type="journal article" date="2009" name="PLoS Biol.">
        <title>Lineage-specific biology revealed by a finished genome assembly of the mouse.</title>
        <authorList>
            <person name="Church D.M."/>
            <person name="Goodstadt L."/>
            <person name="Hillier L.W."/>
            <person name="Zody M.C."/>
            <person name="Goldstein S."/>
            <person name="She X."/>
            <person name="Bult C.J."/>
            <person name="Agarwala R."/>
            <person name="Cherry J.L."/>
            <person name="DiCuccio M."/>
            <person name="Hlavina W."/>
            <person name="Kapustin Y."/>
            <person name="Meric P."/>
            <person name="Maglott D."/>
            <person name="Birtle Z."/>
            <person name="Marques A.C."/>
            <person name="Graves T."/>
            <person name="Zhou S."/>
            <person name="Teague B."/>
            <person name="Potamousis K."/>
            <person name="Churas C."/>
            <person name="Place M."/>
            <person name="Herschleb J."/>
            <person name="Runnheim R."/>
            <person name="Forrest D."/>
            <person name="Amos-Landgraf J."/>
            <person name="Schwartz D.C."/>
            <person name="Cheng Z."/>
            <person name="Lindblad-Toh K."/>
            <person name="Eichler E.E."/>
            <person name="Ponting C.P."/>
        </authorList>
    </citation>
    <scope>NUCLEOTIDE SEQUENCE [LARGE SCALE GENOMIC DNA]</scope>
    <source>
        <strain>C57BL/6J</strain>
    </source>
</reference>
<reference key="3">
    <citation type="journal article" date="2001" name="Proc. Natl. Acad. Sci. U.S.A.">
        <title>All kinesin superfamily protein, KIF, genes in mouse and human.</title>
        <authorList>
            <person name="Miki H."/>
            <person name="Setou M."/>
            <person name="Kaneshiro K."/>
        </authorList>
    </citation>
    <scope>NUCLEOTIDE SEQUENCE [GENOMIC DNA] OF 467-613</scope>
</reference>
<reference key="4">
    <citation type="journal article" date="2003" name="DNA Res.">
        <title>Prediction of the coding sequences of mouse homologues of KIAA gene: III. The complete nucleotide sequences of 500 mouse KIAA-homologous cDNAs identified by screening of terminal sequences of cDNA clones randomly sampled from size-fractionated libraries.</title>
        <authorList>
            <person name="Okazaki N."/>
            <person name="Kikuno R."/>
            <person name="Ohara R."/>
            <person name="Inamoto S."/>
            <person name="Koseki H."/>
            <person name="Hiraoka S."/>
            <person name="Saga Y."/>
            <person name="Nagase T."/>
            <person name="Ohara O."/>
            <person name="Koga H."/>
        </authorList>
    </citation>
    <scope>NUCLEOTIDE SEQUENCE [LARGE SCALE MRNA] OF 574-1881</scope>
    <source>
        <tissue>Embryonic tail</tissue>
    </source>
</reference>
<reference key="5">
    <citation type="journal article" date="2004" name="Genome Res.">
        <title>The status, quality, and expansion of the NIH full-length cDNA project: the Mammalian Gene Collection (MGC).</title>
        <authorList>
            <consortium name="The MGC Project Team"/>
        </authorList>
    </citation>
    <scope>NUCLEOTIDE SEQUENCE [LARGE SCALE MRNA] OF 781-1881</scope>
    <source>
        <strain>C57BL/6J</strain>
        <tissue>Brain</tissue>
    </source>
</reference>
<reference key="6">
    <citation type="journal article" date="2010" name="Cell">
        <title>A tissue-specific atlas of mouse protein phosphorylation and expression.</title>
        <authorList>
            <person name="Huttlin E.L."/>
            <person name="Jedrychowski M.P."/>
            <person name="Elias J.E."/>
            <person name="Goswami T."/>
            <person name="Rad R."/>
            <person name="Beausoleil S.A."/>
            <person name="Villen J."/>
            <person name="Haas W."/>
            <person name="Sowa M.E."/>
            <person name="Gygi S.P."/>
        </authorList>
    </citation>
    <scope>IDENTIFICATION BY MASS SPECTROMETRY [LARGE SCALE ANALYSIS]</scope>
    <source>
        <tissue>Brown adipose tissue</tissue>
        <tissue>Spleen</tissue>
    </source>
</reference>
<reference key="7">
    <citation type="journal article" date="2022" name="Dev. Cell">
        <title>Loss of non-motor kinesin KIF26A causes congenital brain malformations via dysregulated neuronal migration and axonal growth as well as apoptosis.</title>
        <authorList>
            <person name="Qian X."/>
            <person name="DeGennaro E.M."/>
            <person name="Talukdar M."/>
            <person name="Akula S.K."/>
            <person name="Lai A."/>
            <person name="Shao D.D."/>
            <person name="Gonzalez D."/>
            <person name="Marciano J.H."/>
            <person name="Smith R.S."/>
            <person name="Hylton N.K."/>
            <person name="Yang E."/>
            <person name="Bazan J.F."/>
            <person name="Barrett L."/>
            <person name="Yeh R.C."/>
            <person name="Hill R.S."/>
            <person name="Beck S.G."/>
            <person name="Otani A."/>
            <person name="Angad J."/>
            <person name="Mitani T."/>
            <person name="Posey J.E."/>
            <person name="Pehlivan D."/>
            <person name="Calame D."/>
            <person name="Aydin H."/>
            <person name="Yesilbas O."/>
            <person name="Parks K.C."/>
            <person name="Argilli E."/>
            <person name="England E."/>
            <person name="Im K."/>
            <person name="Taranath A."/>
            <person name="Scott H.S."/>
            <person name="Barnett C.P."/>
            <person name="Arts P."/>
            <person name="Sherr E.H."/>
            <person name="Lupski J.R."/>
            <person name="Walsh C.A."/>
        </authorList>
    </citation>
    <scope>FUNCTION</scope>
</reference>
<organism>
    <name type="scientific">Mus musculus</name>
    <name type="common">Mouse</name>
    <dbReference type="NCBI Taxonomy" id="10090"/>
    <lineage>
        <taxon>Eukaryota</taxon>
        <taxon>Metazoa</taxon>
        <taxon>Chordata</taxon>
        <taxon>Craniata</taxon>
        <taxon>Vertebrata</taxon>
        <taxon>Euteleostomi</taxon>
        <taxon>Mammalia</taxon>
        <taxon>Eutheria</taxon>
        <taxon>Euarchontoglires</taxon>
        <taxon>Glires</taxon>
        <taxon>Rodentia</taxon>
        <taxon>Myomorpha</taxon>
        <taxon>Muroidea</taxon>
        <taxon>Muridae</taxon>
        <taxon>Murinae</taxon>
        <taxon>Mus</taxon>
        <taxon>Mus</taxon>
    </lineage>
</organism>
<proteinExistence type="evidence at protein level"/>
<sequence length="1881" mass="196313">MVGRGASLCAVQPAVAECGPARETPPLEVSPRKRLPAGLDQDPCSSRPAPEGAGASAEQSHSAGGGGWCRHCHTKLVELKRQAWKLVSGPGTPLRDPCLSTLLLDKLPASGVQPACRPDTESRCDVCTTHLHQLTREALRLLQTPASHEDPNASRGGLAAPSSRDPPGPVGLMGRQPPVGPDRRKATAWPPGPSVQVSVAPAGLGGALSTVTIQAQQCLEGVWSLSRVNSFLPPTCLAEAAVAAVAVADTVRDCAPAAGPERMSKAWGRGAACTTALVTPAPGTSAGGSTGPSAAASFFIRAAQKLSLASKRKKHHPPPAPSTRGTSTYPTDFSGSLQLWPPPVPPCLLRAASKAKENPSSFGKVKVMLRIWPAQGVQRSAESTSFLKVDSRKKQVTLYDPAAGPPGCAGLRHAPTAPVPKMFAFDAIFPQDSEQAEVCSGTVADVLQSVVSGADGCIFSFGHMSLGKSYTMIGKDSSPQSLGIVPCAISWLFRLIDERKERLGTRFSIRVSAVEVCGHDQSLRDLLAEVASGSLQDTQSPGVYLREDPVCGTQLQNQNELRAPTAEKAAFYLDAALAARSTSRAGCGEEARRSSHMLFTLHVYQYRVEKCGQGGMSGGRSRLHLIDLGSCDAAVGRGGEASGGPLCLSLSALGSVILALVNGAKHVPYRDHRLTMLLRESLATTNCRTTMIAHISDSPAHHAETLSTVQLAARIHRLRRKKGKHASSSSGGESSCEEGRARRPPHLRPFHPRAVVLDPDRSAPGLSGDPDYSSSSEQSCDTVIYVGPGGMALSDRELTDNEGPPDFVPIIPALSRRRPSEGPRDADHFRCSTFAELQERLECIDGSEAFPGPQGGSDGAQASPARGGRKPSLPEATPSRKAVAPTVVTSCPRGSPGHDTHRSASDPSKTGTQSEQRVDGSRPEPPASDKTSGGGGRRPLPSPAPPPPRQPEAQGIPKEPGGEGTDSVLRTPPVGMSGQAALPPLLSDSAYLSPSARGRHLERGLLTTTVTLQQPVELNGEDELVFTVVEELPLGGLAGATRPSSLASMSSDCSLQALASGSRPVSIISSINDEFDAYTSQMSEGPGDPGEFPEGTAWAGGSPASSIGSWLSDVGVCLSESRGPTPQPPFSPNSAAGPGPPEFPTPGSSLEESKVRSSECGRPDNPGSARSLHPGEAVATTQTQPGREPWARSPHEVASAQTIHSSLPRKPRTTSTASRARPSRGPYSPGGLFEDPWLLRAEDCDTRQIASTGRAPSPTPGSPRLPETQMMLACAQRVVDGCEVASRMSRRPEAVARIPPLRRGATTLGVTTPAASCGDAPAEAVVHSGSLKTTSGSKKSVSPKGAFFPRPSGAGPPAPPVRKSSLEQSTALTPTQALGLTRAGAPSAFRGEEEARPSGRSDSSVPKATSSLKARAGKMDVPYRPSGHMSLERCEGLAHGSSKVRDVVGRPPRAVPRLGVPSASPPLGPAPACRNSPAKGVGATKPPAGGAKGRNLGPSTSRALGAPVKPLGPVAGKTAGGAVPGPRAAPRAVPGIGAKAGRGTIMGTKQAFRAAHSRVHELAASGSPSRGGLSWGSTDSDSGNDSGVNLAEERQPSSPALPSPYSKVTAPRRPQRYSSGHGSDNSSVLSGELPPAMGRTALFYHSGGSSGYESMIRDSEATGSASSAPDSMSESGTASLGARSRSLKSPKKRATGLQRRRLIPAPLPDAAALGRKPSLPGQWVDLPPPLAGSLKEPFEIKVYEIDDVERLQRHRLPLRENEAKPSQDAEKGPVCISSKLRLAERRQQRLQEVQAKRDHLCEELAETQGRLMVEPGRWLEQFEVDPELEPESAEYLVALEQATAALEQCVNLCKAHVMMVTCFDIGVAATTAVPGPQEVDV</sequence>
<evidence type="ECO:0000250" key="1">
    <source>
        <dbReference type="UniProtKB" id="Q9ULI4"/>
    </source>
</evidence>
<evidence type="ECO:0000255" key="2"/>
<evidence type="ECO:0000255" key="3">
    <source>
        <dbReference type="PROSITE-ProRule" id="PRU00283"/>
    </source>
</evidence>
<evidence type="ECO:0000256" key="4">
    <source>
        <dbReference type="SAM" id="MobiDB-lite"/>
    </source>
</evidence>
<evidence type="ECO:0000269" key="5">
    <source>
    </source>
</evidence>
<evidence type="ECO:0000269" key="6">
    <source>
    </source>
</evidence>
<evidence type="ECO:0000305" key="7"/>
<gene>
    <name type="primary">Kif26a</name>
    <name type="synonym">Kiaa1236</name>
</gene>
<accession>Q52KG5</accession>
<accession>C9EF47</accession>
<accession>Q6PCY3</accession>
<accession>Q6ZPV4</accession>
<accession>Q99PT4</accession>
<protein>
    <recommendedName>
        <fullName>Kinesin-like protein KIF26A</fullName>
    </recommendedName>
</protein>
<name>KI26A_MOUSE</name>
<keyword id="KW-0067">ATP-binding</keyword>
<keyword id="KW-0175">Coiled coil</keyword>
<keyword id="KW-0963">Cytoplasm</keyword>
<keyword id="KW-0206">Cytoskeleton</keyword>
<keyword id="KW-0493">Microtubule</keyword>
<keyword id="KW-0505">Motor protein</keyword>
<keyword id="KW-0547">Nucleotide-binding</keyword>
<keyword id="KW-0597">Phosphoprotein</keyword>
<keyword id="KW-1185">Reference proteome</keyword>
<feature type="chain" id="PRO_0000307300" description="Kinesin-like protein KIF26A">
    <location>
        <begin position="1"/>
        <end position="1881"/>
    </location>
</feature>
<feature type="domain" description="Kinesin motor" evidence="3">
    <location>
        <begin position="364"/>
        <end position="718"/>
    </location>
</feature>
<feature type="region of interest" description="Disordered" evidence="4">
    <location>
        <begin position="20"/>
        <end position="66"/>
    </location>
</feature>
<feature type="region of interest" description="Disordered" evidence="4">
    <location>
        <begin position="145"/>
        <end position="193"/>
    </location>
</feature>
<feature type="region of interest" description="Disordered" evidence="4">
    <location>
        <begin position="309"/>
        <end position="330"/>
    </location>
</feature>
<feature type="region of interest" description="Disordered" evidence="4">
    <location>
        <begin position="718"/>
        <end position="778"/>
    </location>
</feature>
<feature type="region of interest" description="Disordered" evidence="4">
    <location>
        <begin position="794"/>
        <end position="827"/>
    </location>
</feature>
<feature type="region of interest" description="Disordered" evidence="4">
    <location>
        <begin position="846"/>
        <end position="982"/>
    </location>
</feature>
<feature type="region of interest" description="Disordered" evidence="4">
    <location>
        <begin position="1078"/>
        <end position="1104"/>
    </location>
</feature>
<feature type="region of interest" description="Disordered" evidence="4">
    <location>
        <begin position="1118"/>
        <end position="1266"/>
    </location>
</feature>
<feature type="region of interest" description="Disordered" evidence="4">
    <location>
        <begin position="1328"/>
        <end position="1425"/>
    </location>
</feature>
<feature type="region of interest" description="Disordered" evidence="4">
    <location>
        <begin position="1442"/>
        <end position="1633"/>
    </location>
</feature>
<feature type="region of interest" description="Disordered" evidence="4">
    <location>
        <begin position="1652"/>
        <end position="1698"/>
    </location>
</feature>
<feature type="coiled-coil region" evidence="2">
    <location>
        <begin position="1780"/>
        <end position="1812"/>
    </location>
</feature>
<feature type="compositionally biased region" description="Basic residues" evidence="4">
    <location>
        <begin position="742"/>
        <end position="751"/>
    </location>
</feature>
<feature type="compositionally biased region" description="Basic and acidic residues" evidence="4">
    <location>
        <begin position="818"/>
        <end position="827"/>
    </location>
</feature>
<feature type="compositionally biased region" description="Polar residues" evidence="4">
    <location>
        <begin position="905"/>
        <end position="915"/>
    </location>
</feature>
<feature type="compositionally biased region" description="Pro residues" evidence="4">
    <location>
        <begin position="940"/>
        <end position="950"/>
    </location>
</feature>
<feature type="compositionally biased region" description="Low complexity" evidence="4">
    <location>
        <begin position="1084"/>
        <end position="1095"/>
    </location>
</feature>
<feature type="compositionally biased region" description="Basic and acidic residues" evidence="4">
    <location>
        <begin position="1151"/>
        <end position="1162"/>
    </location>
</feature>
<feature type="compositionally biased region" description="Low complexity" evidence="4">
    <location>
        <begin position="1328"/>
        <end position="1353"/>
    </location>
</feature>
<feature type="compositionally biased region" description="Polar residues" evidence="4">
    <location>
        <begin position="1366"/>
        <end position="1378"/>
    </location>
</feature>
<feature type="compositionally biased region" description="Basic and acidic residues" evidence="4">
    <location>
        <begin position="1390"/>
        <end position="1399"/>
    </location>
</feature>
<feature type="compositionally biased region" description="Polar residues" evidence="4">
    <location>
        <begin position="1400"/>
        <end position="1412"/>
    </location>
</feature>
<feature type="compositionally biased region" description="Low complexity" evidence="4">
    <location>
        <begin position="1477"/>
        <end position="1489"/>
    </location>
</feature>
<feature type="compositionally biased region" description="Low complexity" evidence="4">
    <location>
        <begin position="1524"/>
        <end position="1537"/>
    </location>
</feature>
<feature type="compositionally biased region" description="Low complexity" evidence="4">
    <location>
        <begin position="1575"/>
        <end position="1587"/>
    </location>
</feature>
<feature type="compositionally biased region" description="Polar residues" evidence="4">
    <location>
        <begin position="1616"/>
        <end position="1629"/>
    </location>
</feature>
<feature type="compositionally biased region" description="Low complexity" evidence="4">
    <location>
        <begin position="1664"/>
        <end position="1675"/>
    </location>
</feature>
<feature type="compositionally biased region" description="Basic residues" evidence="4">
    <location>
        <begin position="1685"/>
        <end position="1698"/>
    </location>
</feature>
<feature type="binding site" evidence="3">
    <location>
        <begin position="462"/>
        <end position="469"/>
    </location>
    <ligand>
        <name>ATP</name>
        <dbReference type="ChEBI" id="CHEBI:30616"/>
    </ligand>
</feature>
<feature type="modified residue" description="Phosphoserine" evidence="1">
    <location>
        <position position="30"/>
    </location>
</feature>
<feature type="modified residue" description="Phosphoserine" evidence="1">
    <location>
        <position position="1257"/>
    </location>
</feature>
<feature type="modified residue" description="Phosphoserine" evidence="1">
    <location>
        <position position="1654"/>
    </location>
</feature>
<feature type="sequence conflict" description="In Ref. 1; ACV92100." evidence="7" ref="1">
    <original>T</original>
    <variation>A</variation>
    <location>
        <position position="120"/>
    </location>
</feature>
<feature type="sequence conflict" description="In Ref. 1; ACV92100." evidence="7" ref="1">
    <original>N</original>
    <variation>D</variation>
    <location>
        <position position="152"/>
    </location>
</feature>
<feature type="sequence conflict" description="In Ref. 1; ACV92100." evidence="7" ref="1">
    <original>S</original>
    <variation>P</variation>
    <location>
        <position position="163"/>
    </location>
</feature>
<feature type="sequence conflict" description="In Ref. 4; BAC98125." evidence="7" ref="4">
    <original>V</original>
    <variation>I</variation>
    <location>
        <position position="635"/>
    </location>
</feature>
<feature type="sequence conflict" description="In Ref. 4; BAC98125." evidence="7" ref="4">
    <original>T</original>
    <variation>I</variation>
    <location>
        <position position="690"/>
    </location>
</feature>
<feature type="sequence conflict" description="In Ref. 4; BAC98125." evidence="7" ref="4">
    <original>G</original>
    <variation>S</variation>
    <location>
        <position position="1101"/>
    </location>
</feature>
<feature type="sequence conflict" description="In Ref. 5; AAH94358." evidence="7" ref="5">
    <original>L</original>
    <variation>F</variation>
    <location>
        <position position="1118"/>
    </location>
</feature>
<feature type="sequence conflict" description="In Ref. 4; BAC98125." evidence="7" ref="4">
    <original>A</original>
    <variation>V</variation>
    <location>
        <position position="1200"/>
    </location>
</feature>
<feature type="sequence conflict" description="In Ref. 1; ACV92100." evidence="7" ref="1">
    <original>T</original>
    <variation>S</variation>
    <location>
        <position position="1312"/>
    </location>
</feature>
<feature type="sequence conflict" description="In Ref. 4; BAC98125." evidence="7" ref="4">
    <original>T</original>
    <variation>N</variation>
    <location>
        <position position="1333"/>
    </location>
</feature>
<feature type="sequence conflict" description="In Ref. 4; BAC98125." evidence="7" ref="4">
    <original>V</original>
    <variation>A</variation>
    <location>
        <position position="1421"/>
    </location>
</feature>
<feature type="sequence conflict" description="In Ref. 1; ACV92100." evidence="7" ref="1">
    <original>L</original>
    <variation>P</variation>
    <location>
        <position position="1437"/>
    </location>
</feature>
<feature type="sequence conflict" description="In Ref. 4; BAC98125." evidence="7" ref="4">
    <original>T</original>
    <variation>TA</variation>
    <location>
        <position position="1518"/>
    </location>
</feature>
<feature type="sequence conflict" description="In Ref. 1; ACV92100." evidence="7" ref="1">
    <original>S</original>
    <variation>P</variation>
    <location>
        <position position="1577"/>
    </location>
</feature>
<feature type="sequence conflict" description="In Ref. 4; BAC98125." evidence="7" ref="4">
    <original>A</original>
    <variation>V</variation>
    <location>
        <position position="1769"/>
    </location>
</feature>
<feature type="sequence conflict" description="In Ref. 1; ACV92100." evidence="7" ref="1">
    <original>P</original>
    <variation>S</variation>
    <location>
        <position position="1773"/>
    </location>
</feature>
<comment type="function">
    <text evidence="5 6">Atypical kinesin that plays a key role in enteric neuron development. Acts by repressing a cell growth signaling pathway in the enteric nervous system development, possibly via its interaction with GRB2 that prevents GRB2-binding to SHC, thereby attenating the GDNF-Ret signaling. Binds to microtubules but lacks microtubule-based motility due to the absence of ATPase activity (PubMed:19914172). Plays a critical role in cerebral cortical development. It probably acts as a microtubule stabilizer that regulates neurite growth and radial migration of cortical excitatory neurons (PubMed:36228617).</text>
</comment>
<comment type="subunit">
    <text evidence="5">Interacts with GRB2 (via SH2 domain).</text>
</comment>
<comment type="interaction">
    <interactant intactId="EBI-2480646">
        <id>Q52KG5</id>
    </interactant>
    <interactant intactId="EBI-1688">
        <id>Q60631</id>
        <label>Grb2</label>
    </interactant>
    <organismsDiffer>false</organismsDiffer>
    <experiments>2</experiments>
</comment>
<comment type="subcellular location">
    <subcellularLocation>
        <location evidence="7">Cytoplasm</location>
        <location evidence="7">Cytoskeleton</location>
    </subcellularLocation>
</comment>
<comment type="tissue specificity">
    <text evidence="5">Expressed in several neuronal populations.</text>
</comment>
<comment type="developmental stage">
    <text evidence="5">Strong expression is detected in substantia nigra in brain and enteric nervous system in colon at P12. In colon sections at 12.5 dpc, 14.5 dpc, and P12, it is exclusively expressed in enteric nervous system (ENS). Also detected in dorsal root ganglion and spinal cord gray matter at 14.5 dpc.</text>
</comment>
<comment type="disruption phenotype">
    <text evidence="5">Mice exhibit growth retardation, become emaciated, and die within 5 weeks of birth. The median and mean life span is 15 and 16 days. Macroscopic dissection reveal that mice suffered from megacolon, with dilation from the distal small intestine to the proximal colon and display enteric nerve hyperplasia. Severe occlusion are observed in the distal colon, because the colon motility is not coordinated. Defects are due to abnormal enteric nervous system (ENS) proliferation.</text>
</comment>
<comment type="similarity">
    <text evidence="3">Belongs to the TRAFAC class myosin-kinesin ATPase superfamily. Kinesin family. KIF26 subfamily.</text>
</comment>
<comment type="caution">
    <text evidence="7">In contrast to other kinesin-like proteins, residues required for ATPase activity are missing.</text>
</comment>